<feature type="chain" id="PRO_0000357123" description="Methylthioribulose-1-phosphate dehydratase">
    <location>
        <begin position="1"/>
        <end position="222"/>
    </location>
</feature>
<feature type="binding site" evidence="1">
    <location>
        <position position="94"/>
    </location>
    <ligand>
        <name>Zn(2+)</name>
        <dbReference type="ChEBI" id="CHEBI:29105"/>
    </ligand>
</feature>
<feature type="binding site" evidence="1">
    <location>
        <position position="96"/>
    </location>
    <ligand>
        <name>Zn(2+)</name>
        <dbReference type="ChEBI" id="CHEBI:29105"/>
    </ligand>
</feature>
<keyword id="KW-0028">Amino-acid biosynthesis</keyword>
<keyword id="KW-0456">Lyase</keyword>
<keyword id="KW-0479">Metal-binding</keyword>
<keyword id="KW-0486">Methionine biosynthesis</keyword>
<keyword id="KW-0862">Zinc</keyword>
<evidence type="ECO:0000255" key="1">
    <source>
        <dbReference type="HAMAP-Rule" id="MF_01677"/>
    </source>
</evidence>
<dbReference type="EC" id="4.2.1.109" evidence="1"/>
<dbReference type="EMBL" id="CP000668">
    <property type="protein sequence ID" value="ABP41244.1"/>
    <property type="molecule type" value="Genomic_DNA"/>
</dbReference>
<dbReference type="RefSeq" id="WP_011906393.1">
    <property type="nucleotide sequence ID" value="NZ_CP009715.1"/>
</dbReference>
<dbReference type="SMR" id="A4TPN2"/>
<dbReference type="KEGG" id="ypp:YPDSF_2882"/>
<dbReference type="PATRIC" id="fig|386656.14.peg.146"/>
<dbReference type="UniPathway" id="UPA00904">
    <property type="reaction ID" value="UER00875"/>
</dbReference>
<dbReference type="GO" id="GO:0005737">
    <property type="term" value="C:cytoplasm"/>
    <property type="evidence" value="ECO:0007669"/>
    <property type="project" value="InterPro"/>
</dbReference>
<dbReference type="GO" id="GO:0046570">
    <property type="term" value="F:methylthioribulose 1-phosphate dehydratase activity"/>
    <property type="evidence" value="ECO:0007669"/>
    <property type="project" value="UniProtKB-UniRule"/>
</dbReference>
<dbReference type="GO" id="GO:0008270">
    <property type="term" value="F:zinc ion binding"/>
    <property type="evidence" value="ECO:0007669"/>
    <property type="project" value="UniProtKB-UniRule"/>
</dbReference>
<dbReference type="GO" id="GO:0019509">
    <property type="term" value="P:L-methionine salvage from methylthioadenosine"/>
    <property type="evidence" value="ECO:0007669"/>
    <property type="project" value="UniProtKB-UniRule"/>
</dbReference>
<dbReference type="GO" id="GO:0005996">
    <property type="term" value="P:monosaccharide metabolic process"/>
    <property type="evidence" value="ECO:0007669"/>
    <property type="project" value="UniProtKB-ARBA"/>
</dbReference>
<dbReference type="Gene3D" id="3.40.225.10">
    <property type="entry name" value="Class II aldolase/adducin N-terminal domain"/>
    <property type="match status" value="1"/>
</dbReference>
<dbReference type="HAMAP" id="MF_01677">
    <property type="entry name" value="Salvage_MtnB"/>
    <property type="match status" value="1"/>
</dbReference>
<dbReference type="InterPro" id="IPR001303">
    <property type="entry name" value="Aldolase_II/adducin_N"/>
</dbReference>
<dbReference type="InterPro" id="IPR036409">
    <property type="entry name" value="Aldolase_II/adducin_N_sf"/>
</dbReference>
<dbReference type="InterPro" id="IPR017714">
    <property type="entry name" value="MethylthioRu-1-P_deHdtase_MtnB"/>
</dbReference>
<dbReference type="NCBIfam" id="NF006672">
    <property type="entry name" value="PRK09220.1"/>
    <property type="match status" value="1"/>
</dbReference>
<dbReference type="NCBIfam" id="TIGR03328">
    <property type="entry name" value="salvage_mtnB"/>
    <property type="match status" value="1"/>
</dbReference>
<dbReference type="PANTHER" id="PTHR10640">
    <property type="entry name" value="METHYLTHIORIBULOSE-1-PHOSPHATE DEHYDRATASE"/>
    <property type="match status" value="1"/>
</dbReference>
<dbReference type="PANTHER" id="PTHR10640:SF7">
    <property type="entry name" value="METHYLTHIORIBULOSE-1-PHOSPHATE DEHYDRATASE"/>
    <property type="match status" value="1"/>
</dbReference>
<dbReference type="Pfam" id="PF00596">
    <property type="entry name" value="Aldolase_II"/>
    <property type="match status" value="1"/>
</dbReference>
<dbReference type="SMART" id="SM01007">
    <property type="entry name" value="Aldolase_II"/>
    <property type="match status" value="1"/>
</dbReference>
<dbReference type="SUPFAM" id="SSF53639">
    <property type="entry name" value="AraD/HMP-PK domain-like"/>
    <property type="match status" value="1"/>
</dbReference>
<gene>
    <name evidence="1" type="primary">mtnB</name>
    <name type="ordered locus">YPDSF_2882</name>
</gene>
<organism>
    <name type="scientific">Yersinia pestis (strain Pestoides F)</name>
    <dbReference type="NCBI Taxonomy" id="386656"/>
    <lineage>
        <taxon>Bacteria</taxon>
        <taxon>Pseudomonadati</taxon>
        <taxon>Pseudomonadota</taxon>
        <taxon>Gammaproteobacteria</taxon>
        <taxon>Enterobacterales</taxon>
        <taxon>Yersiniaceae</taxon>
        <taxon>Yersinia</taxon>
    </lineage>
</organism>
<comment type="function">
    <text evidence="1">Catalyzes the dehydration of methylthioribulose-1-phosphate (MTRu-1-P) into 2,3-diketo-5-methylthiopentyl-1-phosphate (DK-MTP-1-P).</text>
</comment>
<comment type="catalytic activity">
    <reaction evidence="1">
        <text>5-(methylsulfanyl)-D-ribulose 1-phosphate = 5-methylsulfanyl-2,3-dioxopentyl phosphate + H2O</text>
        <dbReference type="Rhea" id="RHEA:15549"/>
        <dbReference type="ChEBI" id="CHEBI:15377"/>
        <dbReference type="ChEBI" id="CHEBI:58548"/>
        <dbReference type="ChEBI" id="CHEBI:58828"/>
        <dbReference type="EC" id="4.2.1.109"/>
    </reaction>
</comment>
<comment type="cofactor">
    <cofactor evidence="1">
        <name>Zn(2+)</name>
        <dbReference type="ChEBI" id="CHEBI:29105"/>
    </cofactor>
    <text evidence="1">Binds 1 zinc ion per subunit.</text>
</comment>
<comment type="pathway">
    <text evidence="1">Amino-acid biosynthesis; L-methionine biosynthesis via salvage pathway; L-methionine from S-methyl-5-thio-alpha-D-ribose 1-phosphate: step 2/6.</text>
</comment>
<comment type="similarity">
    <text evidence="1">Belongs to the aldolase class II family. MtnB subfamily.</text>
</comment>
<name>MTNB_YERPP</name>
<proteinExistence type="inferred from homology"/>
<sequence length="222" mass="24585">MTENRQLGALLAACHWIGEKGWCPATGGNMSLRLDLAHCLITESGKDKGSLAAEDFLLVETANNHVPSGRTPSAETGLHTLLYRLYPEIQAVLHTHSVNATVLSRVERSNALVLQGYEMQKSLSGQRSHLDAVVIPIFDNDQDIPALAQRVAAYADNRPLQYGFLVRGHGLYCWGNSVVEARRHLEGLEFLFQCELQRRLFDVNSNVDVKPNVDVNPNVEAK</sequence>
<reference key="1">
    <citation type="submission" date="2007-02" db="EMBL/GenBank/DDBJ databases">
        <title>Complete sequence of chromosome of Yersinia pestis Pestoides F.</title>
        <authorList>
            <consortium name="US DOE Joint Genome Institute"/>
            <person name="Copeland A."/>
            <person name="Lucas S."/>
            <person name="Lapidus A."/>
            <person name="Barry K."/>
            <person name="Detter J.C."/>
            <person name="Glavina del Rio T."/>
            <person name="Hammon N."/>
            <person name="Israni S."/>
            <person name="Dalin E."/>
            <person name="Tice H."/>
            <person name="Pitluck S."/>
            <person name="Di Bartolo G."/>
            <person name="Chain P."/>
            <person name="Malfatti S."/>
            <person name="Shin M."/>
            <person name="Vergez L."/>
            <person name="Schmutz J."/>
            <person name="Larimer F."/>
            <person name="Land M."/>
            <person name="Hauser L."/>
            <person name="Worsham P."/>
            <person name="Chu M."/>
            <person name="Bearden S."/>
            <person name="Garcia E."/>
            <person name="Richardson P."/>
        </authorList>
    </citation>
    <scope>NUCLEOTIDE SEQUENCE [LARGE SCALE GENOMIC DNA]</scope>
    <source>
        <strain>Pestoides F</strain>
    </source>
</reference>
<accession>A4TPN2</accession>
<protein>
    <recommendedName>
        <fullName evidence="1">Methylthioribulose-1-phosphate dehydratase</fullName>
        <shortName evidence="1">MTRu-1-P dehydratase</shortName>
        <ecNumber evidence="1">4.2.1.109</ecNumber>
    </recommendedName>
</protein>